<proteinExistence type="inferred from homology"/>
<keyword id="KW-0238">DNA-binding</keyword>
<keyword id="KW-0678">Repressor</keyword>
<keyword id="KW-0804">Transcription</keyword>
<keyword id="KW-0805">Transcription regulation</keyword>
<comment type="function">
    <text evidence="1">Repressor involved in the biosynthesis of the osmoprotectant glycine betaine. It represses transcription of the choline transporter BetT and the genes of BetAB involved in the synthesis of glycine betaine (By similarity).</text>
</comment>
<comment type="pathway">
    <text>Amine and polyamine biosynthesis; betaine biosynthesis via choline pathway [regulation].</text>
</comment>
<dbReference type="EMBL" id="CP000441">
    <property type="protein sequence ID" value="ABI90060.1"/>
    <property type="molecule type" value="Genomic_DNA"/>
</dbReference>
<dbReference type="RefSeq" id="WP_011659481.1">
    <property type="nucleotide sequence ID" value="NZ_CP009799.1"/>
</dbReference>
<dbReference type="SMR" id="Q0B713"/>
<dbReference type="GeneID" id="93087470"/>
<dbReference type="KEGG" id="bam:Bamb_4510"/>
<dbReference type="PATRIC" id="fig|339670.21.peg.4844"/>
<dbReference type="eggNOG" id="COG1309">
    <property type="taxonomic scope" value="Bacteria"/>
</dbReference>
<dbReference type="UniPathway" id="UPA00529"/>
<dbReference type="Proteomes" id="UP000000662">
    <property type="component" value="Chromosome 2"/>
</dbReference>
<dbReference type="GO" id="GO:0003700">
    <property type="term" value="F:DNA-binding transcription factor activity"/>
    <property type="evidence" value="ECO:0007669"/>
    <property type="project" value="UniProtKB-UniRule"/>
</dbReference>
<dbReference type="GO" id="GO:0000976">
    <property type="term" value="F:transcription cis-regulatory region binding"/>
    <property type="evidence" value="ECO:0007669"/>
    <property type="project" value="TreeGrafter"/>
</dbReference>
<dbReference type="GO" id="GO:0019285">
    <property type="term" value="P:glycine betaine biosynthetic process from choline"/>
    <property type="evidence" value="ECO:0007669"/>
    <property type="project" value="UniProtKB-UniRule"/>
</dbReference>
<dbReference type="GO" id="GO:0045892">
    <property type="term" value="P:negative regulation of DNA-templated transcription"/>
    <property type="evidence" value="ECO:0007669"/>
    <property type="project" value="UniProtKB-UniRule"/>
</dbReference>
<dbReference type="Gene3D" id="1.10.357.10">
    <property type="entry name" value="Tetracycline Repressor, domain 2"/>
    <property type="match status" value="1"/>
</dbReference>
<dbReference type="HAMAP" id="MF_00768">
    <property type="entry name" value="HTH_type_BetI"/>
    <property type="match status" value="1"/>
</dbReference>
<dbReference type="InterPro" id="IPR039538">
    <property type="entry name" value="BetI_C"/>
</dbReference>
<dbReference type="InterPro" id="IPR023772">
    <property type="entry name" value="DNA-bd_HTH_TetR-type_CS"/>
</dbReference>
<dbReference type="InterPro" id="IPR009057">
    <property type="entry name" value="Homeodomain-like_sf"/>
</dbReference>
<dbReference type="InterPro" id="IPR050109">
    <property type="entry name" value="HTH-type_TetR-like_transc_reg"/>
</dbReference>
<dbReference type="InterPro" id="IPR001647">
    <property type="entry name" value="HTH_TetR"/>
</dbReference>
<dbReference type="InterPro" id="IPR036271">
    <property type="entry name" value="Tet_transcr_reg_TetR-rel_C_sf"/>
</dbReference>
<dbReference type="InterPro" id="IPR017757">
    <property type="entry name" value="Tscrpt_rep_BetI"/>
</dbReference>
<dbReference type="NCBIfam" id="TIGR03384">
    <property type="entry name" value="betaine_BetI"/>
    <property type="match status" value="1"/>
</dbReference>
<dbReference type="NCBIfam" id="NF001978">
    <property type="entry name" value="PRK00767.1"/>
    <property type="match status" value="1"/>
</dbReference>
<dbReference type="PANTHER" id="PTHR30055:SF234">
    <property type="entry name" value="HTH-TYPE TRANSCRIPTIONAL REGULATOR BETI"/>
    <property type="match status" value="1"/>
</dbReference>
<dbReference type="PANTHER" id="PTHR30055">
    <property type="entry name" value="HTH-TYPE TRANSCRIPTIONAL REGULATOR RUTR"/>
    <property type="match status" value="1"/>
</dbReference>
<dbReference type="Pfam" id="PF13977">
    <property type="entry name" value="TetR_C_6"/>
    <property type="match status" value="1"/>
</dbReference>
<dbReference type="Pfam" id="PF00440">
    <property type="entry name" value="TetR_N"/>
    <property type="match status" value="1"/>
</dbReference>
<dbReference type="SUPFAM" id="SSF46689">
    <property type="entry name" value="Homeodomain-like"/>
    <property type="match status" value="1"/>
</dbReference>
<dbReference type="SUPFAM" id="SSF48498">
    <property type="entry name" value="Tetracyclin repressor-like, C-terminal domain"/>
    <property type="match status" value="1"/>
</dbReference>
<dbReference type="PROSITE" id="PS01081">
    <property type="entry name" value="HTH_TETR_1"/>
    <property type="match status" value="1"/>
</dbReference>
<dbReference type="PROSITE" id="PS50977">
    <property type="entry name" value="HTH_TETR_2"/>
    <property type="match status" value="1"/>
</dbReference>
<accession>Q0B713</accession>
<gene>
    <name evidence="2" type="primary">betI</name>
    <name type="ordered locus">Bamb_4510</name>
</gene>
<organism>
    <name type="scientific">Burkholderia ambifaria (strain ATCC BAA-244 / DSM 16087 / CCUG 44356 / LMG 19182 / AMMD)</name>
    <name type="common">Burkholderia cepacia (strain AMMD)</name>
    <dbReference type="NCBI Taxonomy" id="339670"/>
    <lineage>
        <taxon>Bacteria</taxon>
        <taxon>Pseudomonadati</taxon>
        <taxon>Pseudomonadota</taxon>
        <taxon>Betaproteobacteria</taxon>
        <taxon>Burkholderiales</taxon>
        <taxon>Burkholderiaceae</taxon>
        <taxon>Burkholderia</taxon>
        <taxon>Burkholderia cepacia complex</taxon>
    </lineage>
</organism>
<reference key="1">
    <citation type="submission" date="2006-08" db="EMBL/GenBank/DDBJ databases">
        <title>Complete sequence of chromosome 2 of Burkholderia cepacia AMMD.</title>
        <authorList>
            <person name="Copeland A."/>
            <person name="Lucas S."/>
            <person name="Lapidus A."/>
            <person name="Barry K."/>
            <person name="Detter J.C."/>
            <person name="Glavina del Rio T."/>
            <person name="Hammon N."/>
            <person name="Israni S."/>
            <person name="Pitluck S."/>
            <person name="Bruce D."/>
            <person name="Chain P."/>
            <person name="Malfatti S."/>
            <person name="Shin M."/>
            <person name="Vergez L."/>
            <person name="Schmutz J."/>
            <person name="Larimer F."/>
            <person name="Land M."/>
            <person name="Hauser L."/>
            <person name="Kyrpides N."/>
            <person name="Kim E."/>
            <person name="Parke J."/>
            <person name="Coenye T."/>
            <person name="Konstantinidis K."/>
            <person name="Ramette A."/>
            <person name="Tiedje J."/>
            <person name="Richardson P."/>
        </authorList>
    </citation>
    <scope>NUCLEOTIDE SEQUENCE [LARGE SCALE GENOMIC DNA]</scope>
    <source>
        <strain>ATCC BAA-244 / DSM 16087 / CCUG 44356 / LMG 19182 / AMMD</strain>
    </source>
</reference>
<sequence>MPKVGMREIRRAQLIDATLRSIDEAGLPGTTLASVAQRANISTGIVSHYFGDKDGLLEATMRHVLRDLWAATTQRRVAARKDPRSRLRAIVAANFDDTQVSAPVMKTWLAFWSQSMHDAMLKRLQHVNTRRLHSNLCAEFAKALPRAKARQAASGLAALIDGLWLRGALAGGPIDTRAALKLAHDYIDLLLASD</sequence>
<evidence type="ECO:0000250" key="1"/>
<evidence type="ECO:0000255" key="2">
    <source>
        <dbReference type="HAMAP-Rule" id="MF_00768"/>
    </source>
</evidence>
<feature type="chain" id="PRO_1000083554" description="HTH-type transcriptional regulator BetI">
    <location>
        <begin position="1"/>
        <end position="194"/>
    </location>
</feature>
<feature type="domain" description="HTH tetR-type" evidence="2">
    <location>
        <begin position="8"/>
        <end position="68"/>
    </location>
</feature>
<feature type="DNA-binding region" description="H-T-H motif" evidence="2">
    <location>
        <begin position="31"/>
        <end position="50"/>
    </location>
</feature>
<name>BETI_BURCM</name>
<protein>
    <recommendedName>
        <fullName evidence="2">HTH-type transcriptional regulator BetI</fullName>
    </recommendedName>
</protein>